<protein>
    <recommendedName>
        <fullName evidence="1">Aspartate carbamoyltransferase regulatory chain</fullName>
    </recommendedName>
</protein>
<comment type="function">
    <text evidence="1">Involved in allosteric regulation of aspartate carbamoyltransferase.</text>
</comment>
<comment type="cofactor">
    <cofactor evidence="1">
        <name>Zn(2+)</name>
        <dbReference type="ChEBI" id="CHEBI:29105"/>
    </cofactor>
    <text evidence="1">Binds 1 zinc ion per subunit.</text>
</comment>
<comment type="subunit">
    <text evidence="1">Contains catalytic and regulatory chains.</text>
</comment>
<comment type="similarity">
    <text evidence="1">Belongs to the PyrI family.</text>
</comment>
<organism>
    <name type="scientific">Saccharolobus islandicus (strain M.16.27)</name>
    <name type="common">Sulfolobus islandicus</name>
    <dbReference type="NCBI Taxonomy" id="427318"/>
    <lineage>
        <taxon>Archaea</taxon>
        <taxon>Thermoproteota</taxon>
        <taxon>Thermoprotei</taxon>
        <taxon>Sulfolobales</taxon>
        <taxon>Sulfolobaceae</taxon>
        <taxon>Saccharolobus</taxon>
    </lineage>
</organism>
<feature type="chain" id="PRO_1000201614" description="Aspartate carbamoyltransferase regulatory chain">
    <location>
        <begin position="1"/>
        <end position="159"/>
    </location>
</feature>
<feature type="binding site" evidence="1">
    <location>
        <position position="113"/>
    </location>
    <ligand>
        <name>Zn(2+)</name>
        <dbReference type="ChEBI" id="CHEBI:29105"/>
    </ligand>
</feature>
<feature type="binding site" evidence="1">
    <location>
        <position position="118"/>
    </location>
    <ligand>
        <name>Zn(2+)</name>
        <dbReference type="ChEBI" id="CHEBI:29105"/>
    </ligand>
</feature>
<feature type="binding site" evidence="1">
    <location>
        <position position="142"/>
    </location>
    <ligand>
        <name>Zn(2+)</name>
        <dbReference type="ChEBI" id="CHEBI:29105"/>
    </ligand>
</feature>
<feature type="binding site" evidence="1">
    <location>
        <position position="145"/>
    </location>
    <ligand>
        <name>Zn(2+)</name>
        <dbReference type="ChEBI" id="CHEBI:29105"/>
    </ligand>
</feature>
<accession>C3N689</accession>
<reference key="1">
    <citation type="journal article" date="2009" name="Proc. Natl. Acad. Sci. U.S.A.">
        <title>Biogeography of the Sulfolobus islandicus pan-genome.</title>
        <authorList>
            <person name="Reno M.L."/>
            <person name="Held N.L."/>
            <person name="Fields C.J."/>
            <person name="Burke P.V."/>
            <person name="Whitaker R.J."/>
        </authorList>
    </citation>
    <scope>NUCLEOTIDE SEQUENCE [LARGE SCALE GENOMIC DNA]</scope>
    <source>
        <strain>M.16.27</strain>
    </source>
</reference>
<gene>
    <name evidence="1" type="primary">pyrI</name>
    <name type="ordered locus">M1627_1634</name>
</gene>
<evidence type="ECO:0000255" key="1">
    <source>
        <dbReference type="HAMAP-Rule" id="MF_00002"/>
    </source>
</evidence>
<dbReference type="EMBL" id="CP001401">
    <property type="protein sequence ID" value="ACP55514.1"/>
    <property type="molecule type" value="Genomic_DNA"/>
</dbReference>
<dbReference type="RefSeq" id="WP_012711513.1">
    <property type="nucleotide sequence ID" value="NC_012632.1"/>
</dbReference>
<dbReference type="SMR" id="C3N689"/>
<dbReference type="GeneID" id="84053119"/>
<dbReference type="KEGG" id="sim:M1627_1634"/>
<dbReference type="HOGENOM" id="CLU_128576_0_0_2"/>
<dbReference type="Proteomes" id="UP000002307">
    <property type="component" value="Chromosome"/>
</dbReference>
<dbReference type="GO" id="GO:0009347">
    <property type="term" value="C:aspartate carbamoyltransferase complex"/>
    <property type="evidence" value="ECO:0007669"/>
    <property type="project" value="InterPro"/>
</dbReference>
<dbReference type="GO" id="GO:0046872">
    <property type="term" value="F:metal ion binding"/>
    <property type="evidence" value="ECO:0007669"/>
    <property type="project" value="UniProtKB-KW"/>
</dbReference>
<dbReference type="GO" id="GO:0006207">
    <property type="term" value="P:'de novo' pyrimidine nucleobase biosynthetic process"/>
    <property type="evidence" value="ECO:0007669"/>
    <property type="project" value="InterPro"/>
</dbReference>
<dbReference type="GO" id="GO:0006221">
    <property type="term" value="P:pyrimidine nucleotide biosynthetic process"/>
    <property type="evidence" value="ECO:0007669"/>
    <property type="project" value="UniProtKB-UniRule"/>
</dbReference>
<dbReference type="Gene3D" id="2.30.30.20">
    <property type="entry name" value="Aspartate carbamoyltransferase regulatory subunit, C-terminal domain"/>
    <property type="match status" value="1"/>
</dbReference>
<dbReference type="Gene3D" id="3.30.70.140">
    <property type="entry name" value="Aspartate carbamoyltransferase regulatory subunit, N-terminal domain"/>
    <property type="match status" value="1"/>
</dbReference>
<dbReference type="HAMAP" id="MF_00002">
    <property type="entry name" value="Asp_carb_tr_reg"/>
    <property type="match status" value="1"/>
</dbReference>
<dbReference type="InterPro" id="IPR020545">
    <property type="entry name" value="Asp_carbamoyltransf_reg_N"/>
</dbReference>
<dbReference type="InterPro" id="IPR002801">
    <property type="entry name" value="Asp_carbamoylTrfase_reg"/>
</dbReference>
<dbReference type="InterPro" id="IPR020542">
    <property type="entry name" value="Asp_carbamoyltrfase_reg_C"/>
</dbReference>
<dbReference type="InterPro" id="IPR036792">
    <property type="entry name" value="Asp_carbatrfase_reg_C_sf"/>
</dbReference>
<dbReference type="InterPro" id="IPR036793">
    <property type="entry name" value="Asp_carbatrfase_reg_N_sf"/>
</dbReference>
<dbReference type="NCBIfam" id="TIGR00240">
    <property type="entry name" value="ATCase_reg"/>
    <property type="match status" value="1"/>
</dbReference>
<dbReference type="PANTHER" id="PTHR35805">
    <property type="entry name" value="ASPARTATE CARBAMOYLTRANSFERASE REGULATORY CHAIN"/>
    <property type="match status" value="1"/>
</dbReference>
<dbReference type="PANTHER" id="PTHR35805:SF1">
    <property type="entry name" value="ASPARTATE CARBAMOYLTRANSFERASE REGULATORY CHAIN"/>
    <property type="match status" value="1"/>
</dbReference>
<dbReference type="Pfam" id="PF01948">
    <property type="entry name" value="PyrI"/>
    <property type="match status" value="1"/>
</dbReference>
<dbReference type="Pfam" id="PF02748">
    <property type="entry name" value="PyrI_C"/>
    <property type="match status" value="1"/>
</dbReference>
<dbReference type="SUPFAM" id="SSF57825">
    <property type="entry name" value="Aspartate carbamoyltransferase, Regulatory-chain, C-terminal domain"/>
    <property type="match status" value="1"/>
</dbReference>
<dbReference type="SUPFAM" id="SSF54893">
    <property type="entry name" value="Aspartate carbamoyltransferase, Regulatory-chain, N-terminal domain"/>
    <property type="match status" value="1"/>
</dbReference>
<name>PYRI_SACI3</name>
<sequence length="159" mass="17981">MISSSKRDELIVSKIRKGTVIDHIPAGRALAVLRILGIRGSEGYRVALVMNVESKKIGRKDIVKIEDRVIDEKEASLITLIAPSATINIIRDYVVTEKRHLEVPKQIRGLIKCPNPQCITNNDVEAESRFTTISIKPLKLKCEYCEIYITEEDVIRQIL</sequence>
<proteinExistence type="inferred from homology"/>
<keyword id="KW-0479">Metal-binding</keyword>
<keyword id="KW-0665">Pyrimidine biosynthesis</keyword>
<keyword id="KW-0862">Zinc</keyword>